<accession>Q9SNX2</accession>
<protein>
    <recommendedName>
        <fullName>Phosphoglucomutase, cytoplasmic</fullName>
        <shortName>PGM</shortName>
        <ecNumber evidence="3">5.4.2.2</ecNumber>
    </recommendedName>
    <alternativeName>
        <fullName>Glucose phosphomutase</fullName>
    </alternativeName>
</protein>
<feature type="chain" id="PRO_0000147800" description="Phosphoglucomutase, cytoplasmic">
    <location>
        <begin position="1"/>
        <end position="581"/>
    </location>
</feature>
<feature type="region of interest" description="Disordered" evidence="4">
    <location>
        <begin position="1"/>
        <end position="20"/>
    </location>
</feature>
<feature type="compositionally biased region" description="Basic and acidic residues" evidence="4">
    <location>
        <begin position="1"/>
        <end position="11"/>
    </location>
</feature>
<feature type="active site" description="Phosphoserine intermediate" evidence="1">
    <location>
        <position position="123"/>
    </location>
</feature>
<feature type="binding site" evidence="1">
    <location>
        <position position="24"/>
    </location>
    <ligand>
        <name>alpha-D-glucose 1,6-bisphosphate</name>
        <dbReference type="ChEBI" id="CHEBI:58392"/>
    </ligand>
</feature>
<feature type="binding site" evidence="1">
    <location>
        <position position="123"/>
    </location>
    <ligand>
        <name>alpha-D-glucose 1,6-bisphosphate</name>
        <dbReference type="ChEBI" id="CHEBI:58392"/>
    </ligand>
</feature>
<feature type="binding site" description="via phosphate group" evidence="1">
    <location>
        <position position="123"/>
    </location>
    <ligand>
        <name>Mg(2+)</name>
        <dbReference type="ChEBI" id="CHEBI:18420"/>
    </ligand>
</feature>
<feature type="binding site" evidence="1">
    <location>
        <position position="298"/>
    </location>
    <ligand>
        <name>Mg(2+)</name>
        <dbReference type="ChEBI" id="CHEBI:18420"/>
    </ligand>
</feature>
<feature type="binding site" evidence="1">
    <location>
        <position position="300"/>
    </location>
    <ligand>
        <name>Mg(2+)</name>
        <dbReference type="ChEBI" id="CHEBI:18420"/>
    </ligand>
</feature>
<feature type="binding site" evidence="1">
    <location>
        <position position="302"/>
    </location>
    <ligand>
        <name>alpha-D-glucose 1,6-bisphosphate</name>
        <dbReference type="ChEBI" id="CHEBI:58392"/>
    </ligand>
</feature>
<feature type="binding site" evidence="1">
    <location>
        <position position="302"/>
    </location>
    <ligand>
        <name>Mg(2+)</name>
        <dbReference type="ChEBI" id="CHEBI:18420"/>
    </ligand>
</feature>
<feature type="binding site" evidence="1">
    <location>
        <position position="303"/>
    </location>
    <ligand>
        <name>alpha-D-glucose 1,6-bisphosphate</name>
        <dbReference type="ChEBI" id="CHEBI:58392"/>
    </ligand>
</feature>
<feature type="binding site" evidence="1">
    <location>
        <position position="366"/>
    </location>
    <ligand>
        <name>alpha-D-glucose 1,6-bisphosphate</name>
        <dbReference type="ChEBI" id="CHEBI:58392"/>
    </ligand>
</feature>
<feature type="binding site" evidence="1">
    <location>
        <position position="385"/>
    </location>
    <ligand>
        <name>alpha-D-glucose 1,6-bisphosphate</name>
        <dbReference type="ChEBI" id="CHEBI:58392"/>
    </ligand>
</feature>
<feature type="binding site" evidence="1">
    <location>
        <position position="387"/>
    </location>
    <ligand>
        <name>alpha-D-glucose 1,6-bisphosphate</name>
        <dbReference type="ChEBI" id="CHEBI:58392"/>
    </ligand>
</feature>
<feature type="binding site" evidence="1">
    <location>
        <position position="398"/>
    </location>
    <ligand>
        <name>alpha-D-glucose 1,6-bisphosphate</name>
        <dbReference type="ChEBI" id="CHEBI:58392"/>
    </ligand>
</feature>
<feature type="modified residue" description="Phosphoserine" evidence="1">
    <location>
        <position position="123"/>
    </location>
</feature>
<reference key="1">
    <citation type="submission" date="1999-10" db="EMBL/GenBank/DDBJ databases">
        <title>Expression of a phosphoglucomutase in bromegrass suspension culture cells during abscisic acid induced freezing tolerance.</title>
        <authorList>
            <person name="Sritubtim S."/>
            <person name="Lee S.P."/>
        </authorList>
    </citation>
    <scope>NUCLEOTIDE SEQUENCE [MRNA]</scope>
</reference>
<organism>
    <name type="scientific">Bromus inermis</name>
    <name type="common">Smooth brome grass</name>
    <name type="synonym">Bromopsis inermis</name>
    <dbReference type="NCBI Taxonomy" id="15371"/>
    <lineage>
        <taxon>Eukaryota</taxon>
        <taxon>Viridiplantae</taxon>
        <taxon>Streptophyta</taxon>
        <taxon>Embryophyta</taxon>
        <taxon>Tracheophyta</taxon>
        <taxon>Spermatophyta</taxon>
        <taxon>Magnoliopsida</taxon>
        <taxon>Liliopsida</taxon>
        <taxon>Poales</taxon>
        <taxon>Poaceae</taxon>
        <taxon>BOP clade</taxon>
        <taxon>Pooideae</taxon>
        <taxon>Triticodae</taxon>
        <taxon>Bromeae</taxon>
        <taxon>Bromus</taxon>
    </lineage>
</organism>
<dbReference type="EC" id="5.4.2.2" evidence="3"/>
<dbReference type="EMBL" id="AF197925">
    <property type="protein sequence ID" value="AAF04862.1"/>
    <property type="molecule type" value="mRNA"/>
</dbReference>
<dbReference type="SMR" id="Q9SNX2"/>
<dbReference type="GO" id="GO:0005829">
    <property type="term" value="C:cytosol"/>
    <property type="evidence" value="ECO:0007669"/>
    <property type="project" value="TreeGrafter"/>
</dbReference>
<dbReference type="GO" id="GO:0000287">
    <property type="term" value="F:magnesium ion binding"/>
    <property type="evidence" value="ECO:0007669"/>
    <property type="project" value="InterPro"/>
</dbReference>
<dbReference type="GO" id="GO:0004614">
    <property type="term" value="F:phosphoglucomutase activity"/>
    <property type="evidence" value="ECO:0007669"/>
    <property type="project" value="UniProtKB-EC"/>
</dbReference>
<dbReference type="GO" id="GO:0006006">
    <property type="term" value="P:glucose metabolic process"/>
    <property type="evidence" value="ECO:0007669"/>
    <property type="project" value="UniProtKB-KW"/>
</dbReference>
<dbReference type="CDD" id="cd03085">
    <property type="entry name" value="PGM1"/>
    <property type="match status" value="1"/>
</dbReference>
<dbReference type="FunFam" id="3.30.310.50:FF:000002">
    <property type="entry name" value="Phosphoglucomutase 5"/>
    <property type="match status" value="1"/>
</dbReference>
<dbReference type="FunFam" id="3.40.120.10:FF:000004">
    <property type="entry name" value="Phosphoglucomutase 5"/>
    <property type="match status" value="1"/>
</dbReference>
<dbReference type="FunFam" id="3.40.120.10:FF:000005">
    <property type="entry name" value="Phosphoglucomutase 5"/>
    <property type="match status" value="1"/>
</dbReference>
<dbReference type="FunFam" id="3.40.120.10:FF:000009">
    <property type="entry name" value="Phosphoglucomutase, cytoplasmic 1"/>
    <property type="match status" value="1"/>
</dbReference>
<dbReference type="Gene3D" id="3.40.120.10">
    <property type="entry name" value="Alpha-D-Glucose-1,6-Bisphosphate, subunit A, domain 3"/>
    <property type="match status" value="3"/>
</dbReference>
<dbReference type="Gene3D" id="3.30.310.50">
    <property type="entry name" value="Alpha-D-phosphohexomutase, C-terminal domain"/>
    <property type="match status" value="1"/>
</dbReference>
<dbReference type="InterPro" id="IPR005844">
    <property type="entry name" value="A-D-PHexomutase_a/b/a-I"/>
</dbReference>
<dbReference type="InterPro" id="IPR016055">
    <property type="entry name" value="A-D-PHexomutase_a/b/a-I/II/III"/>
</dbReference>
<dbReference type="InterPro" id="IPR005845">
    <property type="entry name" value="A-D-PHexomutase_a/b/a-II"/>
</dbReference>
<dbReference type="InterPro" id="IPR005846">
    <property type="entry name" value="A-D-PHexomutase_a/b/a-III"/>
</dbReference>
<dbReference type="InterPro" id="IPR036900">
    <property type="entry name" value="A-D-PHexomutase_C_sf"/>
</dbReference>
<dbReference type="InterPro" id="IPR016066">
    <property type="entry name" value="A-D-PHexomutase_CS"/>
</dbReference>
<dbReference type="InterPro" id="IPR005841">
    <property type="entry name" value="Alpha-D-phosphohexomutase_SF"/>
</dbReference>
<dbReference type="InterPro" id="IPR045244">
    <property type="entry name" value="PGM"/>
</dbReference>
<dbReference type="NCBIfam" id="NF005737">
    <property type="entry name" value="PRK07564.1-1"/>
    <property type="match status" value="1"/>
</dbReference>
<dbReference type="PANTHER" id="PTHR22573:SF2">
    <property type="entry name" value="PHOSPHOGLUCOMUTASE"/>
    <property type="match status" value="1"/>
</dbReference>
<dbReference type="PANTHER" id="PTHR22573">
    <property type="entry name" value="PHOSPHOHEXOMUTASE FAMILY MEMBER"/>
    <property type="match status" value="1"/>
</dbReference>
<dbReference type="Pfam" id="PF24947">
    <property type="entry name" value="PGM1_C_vert_fung"/>
    <property type="match status" value="1"/>
</dbReference>
<dbReference type="Pfam" id="PF02878">
    <property type="entry name" value="PGM_PMM_I"/>
    <property type="match status" value="1"/>
</dbReference>
<dbReference type="Pfam" id="PF02879">
    <property type="entry name" value="PGM_PMM_II"/>
    <property type="match status" value="1"/>
</dbReference>
<dbReference type="Pfam" id="PF02880">
    <property type="entry name" value="PGM_PMM_III"/>
    <property type="match status" value="1"/>
</dbReference>
<dbReference type="PRINTS" id="PR00509">
    <property type="entry name" value="PGMPMM"/>
</dbReference>
<dbReference type="SUPFAM" id="SSF55957">
    <property type="entry name" value="Phosphoglucomutase, C-terminal domain"/>
    <property type="match status" value="1"/>
</dbReference>
<dbReference type="SUPFAM" id="SSF53738">
    <property type="entry name" value="Phosphoglucomutase, first 3 domains"/>
    <property type="match status" value="3"/>
</dbReference>
<dbReference type="PROSITE" id="PS00710">
    <property type="entry name" value="PGM_PMM"/>
    <property type="match status" value="1"/>
</dbReference>
<evidence type="ECO:0000250" key="1">
    <source>
        <dbReference type="UniProtKB" id="P00949"/>
    </source>
</evidence>
<evidence type="ECO:0000250" key="2">
    <source>
        <dbReference type="UniProtKB" id="P36871"/>
    </source>
</evidence>
<evidence type="ECO:0000250" key="3">
    <source>
        <dbReference type="UniProtKB" id="P93804"/>
    </source>
</evidence>
<evidence type="ECO:0000256" key="4">
    <source>
        <dbReference type="SAM" id="MobiDB-lite"/>
    </source>
</evidence>
<evidence type="ECO:0000305" key="5"/>
<sequence length="581" mass="62673">MVFSVAKKDTTPYEGQKPGTSGLRKKVTVFQQPHYLANFVQSTFNALPAEEVKGATIVVSGDGRYFSKDAVQIIAKMAAANGVRRVWVGQGSLLSTPAVSAIIRERIAADGSKATGGFILTASHNPGGPTEDFGIKYNMGNGGPAPESVTDKIFSNTKTISEYLIAEDLPDVDISVIGVTTFTGPEGPFDVDVFDSATEYVKLMKTIFDFESIKKLLASPKFSFCFDGMHGVAGAYAKRIFVDELGASESSLLNCVPKEDFGGGHPDPNLTYAKELVDRMGLGKTSNVEPPEFGAAADGDADRNMILGKRFFVTPSDSVAIIAANAVQSIPYFASGLKGVARSMPTSAALDVVAKNLNLKFFEVPTGWKFFGNLMDAGMCSVCGEESFGTGSDHIREKDGIWAVLAWLSILAYKNKDNLGGDKLVTVENIVLQHWGIYGRHYYTRYDYENVDAEAAKELMANLVKMQSSLSDVNKLIKEIQPNVADVVSADEFEYTDPVDGSVSKHQGIRYLFGDGSRLVFRLSGTGSVGATIRIYIEQYEKDSSKTGRESSDALSPLVDVALKLSKIQELTGRSAPTVIT</sequence>
<comment type="function">
    <text evidence="2 3">Catalyzes the reversible isomerization of alpha-D-glucose 1-phosphate to alpha-D-glucose 6-phosphate (By similarity). The mechanism proceeds via the intermediate compound alpha-D-glucose 1,6-bisphosphate (By similarity). This enzyme participates in both the breakdown and synthesis of glucose (By similarity).</text>
</comment>
<comment type="catalytic activity">
    <reaction evidence="3">
        <text>alpha-D-glucose 1-phosphate = alpha-D-glucose 6-phosphate</text>
        <dbReference type="Rhea" id="RHEA:23536"/>
        <dbReference type="ChEBI" id="CHEBI:58225"/>
        <dbReference type="ChEBI" id="CHEBI:58601"/>
        <dbReference type="EC" id="5.4.2.2"/>
    </reaction>
</comment>
<comment type="catalytic activity">
    <reaction evidence="3">
        <text>O-phospho-L-seryl-[protein] + alpha-D-glucose 1-phosphate = alpha-D-glucose 1,6-bisphosphate + L-seryl-[protein]</text>
        <dbReference type="Rhea" id="RHEA:68748"/>
        <dbReference type="Rhea" id="RHEA-COMP:9863"/>
        <dbReference type="Rhea" id="RHEA-COMP:11604"/>
        <dbReference type="ChEBI" id="CHEBI:29999"/>
        <dbReference type="ChEBI" id="CHEBI:58392"/>
        <dbReference type="ChEBI" id="CHEBI:58601"/>
        <dbReference type="ChEBI" id="CHEBI:83421"/>
    </reaction>
</comment>
<comment type="catalytic activity">
    <reaction evidence="3">
        <text>alpha-D-glucose 1,6-bisphosphate + L-seryl-[protein] = O-phospho-L-seryl-[protein] + alpha-D-glucose 6-phosphate</text>
        <dbReference type="Rhea" id="RHEA:68752"/>
        <dbReference type="Rhea" id="RHEA-COMP:9863"/>
        <dbReference type="Rhea" id="RHEA-COMP:11604"/>
        <dbReference type="ChEBI" id="CHEBI:29999"/>
        <dbReference type="ChEBI" id="CHEBI:58225"/>
        <dbReference type="ChEBI" id="CHEBI:58392"/>
        <dbReference type="ChEBI" id="CHEBI:83421"/>
    </reaction>
</comment>
<comment type="cofactor">
    <cofactor evidence="1">
        <name>Mg(2+)</name>
        <dbReference type="ChEBI" id="CHEBI:18420"/>
    </cofactor>
    <text evidence="1">Binds 1 Mg(2+) ion per subunit.</text>
</comment>
<comment type="subunit">
    <text evidence="1">Monomer.</text>
</comment>
<comment type="subcellular location">
    <subcellularLocation>
        <location evidence="3">Cytoplasm</location>
    </subcellularLocation>
</comment>
<comment type="similarity">
    <text evidence="5">Belongs to the phosphohexose mutase family.</text>
</comment>
<gene>
    <name type="primary">PGM1</name>
</gene>
<name>PGMC_BROIN</name>
<proteinExistence type="evidence at transcript level"/>
<keyword id="KW-0119">Carbohydrate metabolism</keyword>
<keyword id="KW-0963">Cytoplasm</keyword>
<keyword id="KW-0313">Glucose metabolism</keyword>
<keyword id="KW-0413">Isomerase</keyword>
<keyword id="KW-0460">Magnesium</keyword>
<keyword id="KW-0479">Metal-binding</keyword>
<keyword id="KW-0597">Phosphoprotein</keyword>